<reference key="1">
    <citation type="journal article" date="1994" name="Biochem. J.">
        <title>Characterization of the CysB protein of Klebsiella aerogenes: direct evidence that N-acetylserine rather than O-acetylserine serves as the inducer of the cysteine regulon.</title>
        <authorList>
            <person name="Lynch A.S."/>
            <person name="Tyrrell R."/>
            <person name="Smerdon S.J."/>
            <person name="Briggs G.S."/>
            <person name="Wilkinson A.J."/>
        </authorList>
    </citation>
    <scope>NUCLEOTIDE SEQUENCE [GENOMIC DNA]</scope>
    <source>
        <strain>ATCC 15380 / DSM 2026 / NCTC 418 / NCIMB 418</strain>
    </source>
</reference>
<reference key="2">
    <citation type="journal article" date="1997" name="Structure">
        <title>The structure of the cofactor-binding fragment of the LysR family member, CysB: a familiar fold with a surprising subunit arrangement.</title>
        <authorList>
            <person name="Tyrrell R."/>
            <person name="Verschueren K.H."/>
            <person name="Dodson E.J."/>
            <person name="Murshudov G.N."/>
            <person name="Addy C."/>
            <person name="Wilkinson A.J."/>
        </authorList>
    </citation>
    <scope>X-RAY CRYSTALLOGRAPHY (1.8 ANGSTROMS) OF 88-324</scope>
    <scope>SEQUENCE REVISION TO 182</scope>
    <source>
        <strain>ATCC 15380 / DSM 2026 / NCTC 418 / NCIMB 418</strain>
    </source>
</reference>
<comment type="function">
    <text>This protein is a positive regulator of gene expression for the cysteine regulon. The inducer for CysB is N-acetylserine. Thiosulfate and sulfide act as anti-inducers.</text>
</comment>
<comment type="subunit">
    <text>Homotetramer.</text>
</comment>
<comment type="subcellular location">
    <subcellularLocation>
        <location>Cytoplasm</location>
    </subcellularLocation>
</comment>
<comment type="similarity">
    <text evidence="2">Belongs to the LysR transcriptional regulatory family.</text>
</comment>
<keyword id="KW-0002">3D-structure</keyword>
<keyword id="KW-0010">Activator</keyword>
<keyword id="KW-0028">Amino-acid biosynthesis</keyword>
<keyword id="KW-0198">Cysteine biosynthesis</keyword>
<keyword id="KW-0963">Cytoplasm</keyword>
<keyword id="KW-0238">DNA-binding</keyword>
<keyword id="KW-0804">Transcription</keyword>
<keyword id="KW-0805">Transcription regulation</keyword>
<name>CYSB_KLEPN</name>
<evidence type="ECO:0000255" key="1">
    <source>
        <dbReference type="PROSITE-ProRule" id="PRU00253"/>
    </source>
</evidence>
<evidence type="ECO:0000305" key="2"/>
<evidence type="ECO:0007829" key="3">
    <source>
        <dbReference type="PDB" id="1AL3"/>
    </source>
</evidence>
<evidence type="ECO:0007829" key="4">
    <source>
        <dbReference type="PDB" id="9F14"/>
    </source>
</evidence>
<proteinExistence type="evidence at protein level"/>
<organism>
    <name type="scientific">Klebsiella pneumoniae</name>
    <dbReference type="NCBI Taxonomy" id="573"/>
    <lineage>
        <taxon>Bacteria</taxon>
        <taxon>Pseudomonadati</taxon>
        <taxon>Pseudomonadota</taxon>
        <taxon>Gammaproteobacteria</taxon>
        <taxon>Enterobacterales</taxon>
        <taxon>Enterobacteriaceae</taxon>
        <taxon>Klebsiella/Raoultella group</taxon>
        <taxon>Klebsiella</taxon>
        <taxon>Klebsiella pneumoniae complex</taxon>
    </lineage>
</organism>
<dbReference type="EMBL" id="X78729">
    <property type="protein sequence ID" value="CAA55380.1"/>
    <property type="molecule type" value="Genomic_DNA"/>
</dbReference>
<dbReference type="RefSeq" id="WP_002901772.1">
    <property type="nucleotide sequence ID" value="NZ_WYAM01000004.1"/>
</dbReference>
<dbReference type="PDB" id="1AL3">
    <property type="method" value="X-ray"/>
    <property type="resolution" value="1.80 A"/>
    <property type="chains" value="A=1-324"/>
</dbReference>
<dbReference type="PDB" id="9F14">
    <property type="method" value="X-ray"/>
    <property type="resolution" value="2.30 A"/>
    <property type="chains" value="A/B=1-324"/>
</dbReference>
<dbReference type="PDB" id="9FDD">
    <property type="method" value="X-ray"/>
    <property type="resolution" value="2.80 A"/>
    <property type="chains" value="A/B/C/D/E/F/G/H=1-324"/>
</dbReference>
<dbReference type="PDBsum" id="1AL3"/>
<dbReference type="PDBsum" id="9F14"/>
<dbReference type="PDBsum" id="9FDD"/>
<dbReference type="SMR" id="P45600"/>
<dbReference type="OMA" id="PVLQKFC"/>
<dbReference type="EvolutionaryTrace" id="P45600"/>
<dbReference type="GO" id="GO:0005737">
    <property type="term" value="C:cytoplasm"/>
    <property type="evidence" value="ECO:0007669"/>
    <property type="project" value="UniProtKB-SubCell"/>
</dbReference>
<dbReference type="GO" id="GO:0003700">
    <property type="term" value="F:DNA-binding transcription factor activity"/>
    <property type="evidence" value="ECO:0007669"/>
    <property type="project" value="InterPro"/>
</dbReference>
<dbReference type="GO" id="GO:0000976">
    <property type="term" value="F:transcription cis-regulatory region binding"/>
    <property type="evidence" value="ECO:0007669"/>
    <property type="project" value="TreeGrafter"/>
</dbReference>
<dbReference type="GO" id="GO:0019344">
    <property type="term" value="P:cysteine biosynthetic process"/>
    <property type="evidence" value="ECO:0007669"/>
    <property type="project" value="UniProtKB-KW"/>
</dbReference>
<dbReference type="CDD" id="cd08443">
    <property type="entry name" value="PBP2_CysB"/>
    <property type="match status" value="1"/>
</dbReference>
<dbReference type="FunFam" id="1.10.10.10:FF:000021">
    <property type="entry name" value="HTH-type transcriptional regulator CysB"/>
    <property type="match status" value="1"/>
</dbReference>
<dbReference type="FunFam" id="3.40.190.10:FF:000037">
    <property type="entry name" value="HTH-type transcriptional regulator CysB"/>
    <property type="match status" value="1"/>
</dbReference>
<dbReference type="Gene3D" id="3.40.190.10">
    <property type="entry name" value="Periplasmic binding protein-like II"/>
    <property type="match status" value="2"/>
</dbReference>
<dbReference type="Gene3D" id="1.10.10.10">
    <property type="entry name" value="Winged helix-like DNA-binding domain superfamily/Winged helix DNA-binding domain"/>
    <property type="match status" value="1"/>
</dbReference>
<dbReference type="InterPro" id="IPR005119">
    <property type="entry name" value="LysR_subst-bd"/>
</dbReference>
<dbReference type="InterPro" id="IPR000847">
    <property type="entry name" value="Tscrpt_reg_HTH_LysR"/>
</dbReference>
<dbReference type="InterPro" id="IPR036388">
    <property type="entry name" value="WH-like_DNA-bd_sf"/>
</dbReference>
<dbReference type="InterPro" id="IPR036390">
    <property type="entry name" value="WH_DNA-bd_sf"/>
</dbReference>
<dbReference type="NCBIfam" id="NF009326">
    <property type="entry name" value="PRK12681.1"/>
    <property type="match status" value="1"/>
</dbReference>
<dbReference type="NCBIfam" id="NF009327">
    <property type="entry name" value="PRK12684.1"/>
    <property type="match status" value="1"/>
</dbReference>
<dbReference type="PANTHER" id="PTHR30126">
    <property type="entry name" value="HTH-TYPE TRANSCRIPTIONAL REGULATOR"/>
    <property type="match status" value="1"/>
</dbReference>
<dbReference type="PANTHER" id="PTHR30126:SF6">
    <property type="entry name" value="HTH-TYPE TRANSCRIPTIONAL REGULATOR CYSB-RELATED"/>
    <property type="match status" value="1"/>
</dbReference>
<dbReference type="Pfam" id="PF00126">
    <property type="entry name" value="HTH_1"/>
    <property type="match status" value="1"/>
</dbReference>
<dbReference type="Pfam" id="PF03466">
    <property type="entry name" value="LysR_substrate"/>
    <property type="match status" value="1"/>
</dbReference>
<dbReference type="PRINTS" id="PR00039">
    <property type="entry name" value="HTHLYSR"/>
</dbReference>
<dbReference type="SUPFAM" id="SSF53850">
    <property type="entry name" value="Periplasmic binding protein-like II"/>
    <property type="match status" value="1"/>
</dbReference>
<dbReference type="SUPFAM" id="SSF46785">
    <property type="entry name" value="Winged helix' DNA-binding domain"/>
    <property type="match status" value="1"/>
</dbReference>
<dbReference type="PROSITE" id="PS50931">
    <property type="entry name" value="HTH_LYSR"/>
    <property type="match status" value="1"/>
</dbReference>
<feature type="chain" id="PRO_0000105618" description="HTH-type transcriptional regulator CysB">
    <location>
        <begin position="1"/>
        <end position="324"/>
    </location>
</feature>
<feature type="domain" description="HTH lysR-type" evidence="1">
    <location>
        <begin position="1"/>
        <end position="59"/>
    </location>
</feature>
<feature type="DNA-binding region" description="H-T-H motif" evidence="1">
    <location>
        <begin position="19"/>
        <end position="38"/>
    </location>
</feature>
<feature type="sequence conflict" description="In Ref. 1; CAA55380." evidence="2" ref="1">
    <original>G</original>
    <variation>A</variation>
    <location>
        <position position="182"/>
    </location>
</feature>
<feature type="helix" evidence="4">
    <location>
        <begin position="3"/>
        <end position="14"/>
    </location>
</feature>
<feature type="turn" evidence="4">
    <location>
        <begin position="15"/>
        <end position="17"/>
    </location>
</feature>
<feature type="helix" evidence="4">
    <location>
        <begin position="19"/>
        <end position="25"/>
    </location>
</feature>
<feature type="helix" evidence="4">
    <location>
        <begin position="30"/>
        <end position="44"/>
    </location>
</feature>
<feature type="strand" evidence="4">
    <location>
        <begin position="48"/>
        <end position="59"/>
    </location>
</feature>
<feature type="helix" evidence="4">
    <location>
        <begin position="61"/>
        <end position="88"/>
    </location>
</feature>
<feature type="strand" evidence="3">
    <location>
        <begin position="92"/>
        <end position="99"/>
    </location>
</feature>
<feature type="helix" evidence="3">
    <location>
        <begin position="101"/>
        <end position="106"/>
    </location>
</feature>
<feature type="helix" evidence="3">
    <location>
        <begin position="109"/>
        <end position="118"/>
    </location>
</feature>
<feature type="strand" evidence="3">
    <location>
        <begin position="121"/>
        <end position="128"/>
    </location>
</feature>
<feature type="helix" evidence="3">
    <location>
        <begin position="131"/>
        <end position="139"/>
    </location>
</feature>
<feature type="strand" evidence="3">
    <location>
        <begin position="144"/>
        <end position="150"/>
    </location>
</feature>
<feature type="helix" evidence="4">
    <location>
        <begin position="152"/>
        <end position="155"/>
    </location>
</feature>
<feature type="strand" evidence="3">
    <location>
        <begin position="158"/>
        <end position="166"/>
    </location>
</feature>
<feature type="strand" evidence="3">
    <location>
        <begin position="168"/>
        <end position="172"/>
    </location>
</feature>
<feature type="strand" evidence="4">
    <location>
        <begin position="174"/>
        <end position="176"/>
    </location>
</feature>
<feature type="turn" evidence="3">
    <location>
        <begin position="177"/>
        <end position="181"/>
    </location>
</feature>
<feature type="helix" evidence="3">
    <location>
        <begin position="186"/>
        <end position="190"/>
    </location>
</feature>
<feature type="strand" evidence="3">
    <location>
        <begin position="192"/>
        <end position="197"/>
    </location>
</feature>
<feature type="helix" evidence="3">
    <location>
        <begin position="204"/>
        <end position="214"/>
    </location>
</feature>
<feature type="strand" evidence="3">
    <location>
        <begin position="219"/>
        <end position="226"/>
    </location>
</feature>
<feature type="helix" evidence="3">
    <location>
        <begin position="227"/>
        <end position="236"/>
    </location>
</feature>
<feature type="strand" evidence="3">
    <location>
        <begin position="240"/>
        <end position="244"/>
    </location>
</feature>
<feature type="helix" evidence="3">
    <location>
        <begin position="245"/>
        <end position="247"/>
    </location>
</feature>
<feature type="turn" evidence="3">
    <location>
        <begin position="250"/>
        <end position="252"/>
    </location>
</feature>
<feature type="strand" evidence="3">
    <location>
        <begin position="256"/>
        <end position="260"/>
    </location>
</feature>
<feature type="turn" evidence="4">
    <location>
        <begin position="262"/>
        <end position="264"/>
    </location>
</feature>
<feature type="strand" evidence="3">
    <location>
        <begin position="268"/>
        <end position="275"/>
    </location>
</feature>
<feature type="helix" evidence="3">
    <location>
        <begin position="282"/>
        <end position="291"/>
    </location>
</feature>
<feature type="helix" evidence="3">
    <location>
        <begin position="297"/>
        <end position="305"/>
    </location>
</feature>
<feature type="helix" evidence="3">
    <location>
        <begin position="309"/>
        <end position="318"/>
    </location>
</feature>
<protein>
    <recommendedName>
        <fullName>HTH-type transcriptional regulator CysB</fullName>
    </recommendedName>
    <alternativeName>
        <fullName>Cys regulon transcriptional activator</fullName>
    </alternativeName>
</protein>
<accession>P45600</accession>
<sequence>MKLQQLRYIVEVVNHNLNVSSTAEGLYTSQPGISKQVRMLEDELGIQIFARSGKHLTQVTPAGQEIIRIAREVLSKVDAIKSVAGEHTWPDKGSLYVATTHTQARYALPGVIKGFIERYPRVSLHMHQGSPTQIAEAVSKGNADFAIATEALHLYDDLVMLPCYHWNRSIVVTPEHPLATKGSVSIEELAQYPLVTYTFGFTGRSELDTAFNRAGLTPRIVFTATDADVIKTYVRLGLGVGVIASMAVDPVSDPDLVKLDANGIFSHSTTKIGFRRSTFLRSYMYDFIQRFAPHLTRDVVDTAVALRSNEDIEAMFKDIKLPEK</sequence>
<gene>
    <name type="primary">cysB</name>
</gene>